<name>PHNX_BORPE</name>
<sequence>MNAMTLATLPVRLEALVFDWAGTLVDFGSFAPTKVFVDAFARFGVQISLEQARGPMGMGKWDHIRALCNDAAIARQYQEQFGRLPTDEDVTAIYERFLPMQLEKVAEYSQPIPGAIELLHGLRQRGLKLGSCSGYPAAVMQRVLERAEREGLALDYVVASDDVPRSRPAPAMALRNVVELGIADVAGCVKVDDTAPGVEEGRRAGMWTVGLLLSGNAAGLSLEQFLSLDEAGREAARDRARAELQAGAPHYLIDTVADLPPVLADIETRLAAGQRP</sequence>
<dbReference type="EC" id="3.11.1.1" evidence="1"/>
<dbReference type="EMBL" id="BX640417">
    <property type="protein sequence ID" value="CAE42549.1"/>
    <property type="molecule type" value="Genomic_DNA"/>
</dbReference>
<dbReference type="RefSeq" id="NP_880916.1">
    <property type="nucleotide sequence ID" value="NC_002929.2"/>
</dbReference>
<dbReference type="RefSeq" id="WP_003820286.1">
    <property type="nucleotide sequence ID" value="NZ_CP039022.1"/>
</dbReference>
<dbReference type="SMR" id="Q7VWH8"/>
<dbReference type="STRING" id="257313.BP2275"/>
<dbReference type="PaxDb" id="257313-BP2275"/>
<dbReference type="GeneID" id="93204237"/>
<dbReference type="KEGG" id="bpe:BP2275"/>
<dbReference type="PATRIC" id="fig|257313.5.peg.2453"/>
<dbReference type="eggNOG" id="COG0637">
    <property type="taxonomic scope" value="Bacteria"/>
</dbReference>
<dbReference type="HOGENOM" id="CLU_045011_12_0_4"/>
<dbReference type="Proteomes" id="UP000002676">
    <property type="component" value="Chromosome"/>
</dbReference>
<dbReference type="GO" id="GO:0005829">
    <property type="term" value="C:cytosol"/>
    <property type="evidence" value="ECO:0007669"/>
    <property type="project" value="TreeGrafter"/>
</dbReference>
<dbReference type="GO" id="GO:0000287">
    <property type="term" value="F:magnesium ion binding"/>
    <property type="evidence" value="ECO:0007669"/>
    <property type="project" value="UniProtKB-UniRule"/>
</dbReference>
<dbReference type="GO" id="GO:0008967">
    <property type="term" value="F:phosphoglycolate phosphatase activity"/>
    <property type="evidence" value="ECO:0007669"/>
    <property type="project" value="TreeGrafter"/>
</dbReference>
<dbReference type="GO" id="GO:0050194">
    <property type="term" value="F:phosphonoacetaldehyde hydrolase activity"/>
    <property type="evidence" value="ECO:0007669"/>
    <property type="project" value="UniProtKB-UniRule"/>
</dbReference>
<dbReference type="GO" id="GO:0006281">
    <property type="term" value="P:DNA repair"/>
    <property type="evidence" value="ECO:0007669"/>
    <property type="project" value="TreeGrafter"/>
</dbReference>
<dbReference type="GO" id="GO:0019700">
    <property type="term" value="P:organic phosphonate catabolic process"/>
    <property type="evidence" value="ECO:0007669"/>
    <property type="project" value="InterPro"/>
</dbReference>
<dbReference type="CDD" id="cd02586">
    <property type="entry name" value="HAD_PHN"/>
    <property type="match status" value="1"/>
</dbReference>
<dbReference type="FunFam" id="1.10.150.240:FF:000006">
    <property type="entry name" value="Phosphonoacetaldehyde hydrolase"/>
    <property type="match status" value="1"/>
</dbReference>
<dbReference type="Gene3D" id="3.40.50.1000">
    <property type="entry name" value="HAD superfamily/HAD-like"/>
    <property type="match status" value="1"/>
</dbReference>
<dbReference type="Gene3D" id="1.10.150.240">
    <property type="entry name" value="Putative phosphatase, domain 2"/>
    <property type="match status" value="1"/>
</dbReference>
<dbReference type="HAMAP" id="MF_01375">
    <property type="entry name" value="PhnX"/>
    <property type="match status" value="1"/>
</dbReference>
<dbReference type="InterPro" id="IPR050155">
    <property type="entry name" value="HAD-like_hydrolase_sf"/>
</dbReference>
<dbReference type="InterPro" id="IPR036412">
    <property type="entry name" value="HAD-like_sf"/>
</dbReference>
<dbReference type="InterPro" id="IPR006439">
    <property type="entry name" value="HAD-SF_hydro_IA"/>
</dbReference>
<dbReference type="InterPro" id="IPR023214">
    <property type="entry name" value="HAD_sf"/>
</dbReference>
<dbReference type="InterPro" id="IPR023198">
    <property type="entry name" value="PGP-like_dom2"/>
</dbReference>
<dbReference type="InterPro" id="IPR006323">
    <property type="entry name" value="Phosphonoacetald_hydro"/>
</dbReference>
<dbReference type="NCBIfam" id="TIGR01509">
    <property type="entry name" value="HAD-SF-IA-v3"/>
    <property type="match status" value="1"/>
</dbReference>
<dbReference type="NCBIfam" id="TIGR01422">
    <property type="entry name" value="phosphonatase"/>
    <property type="match status" value="1"/>
</dbReference>
<dbReference type="PANTHER" id="PTHR43434">
    <property type="entry name" value="PHOSPHOGLYCOLATE PHOSPHATASE"/>
    <property type="match status" value="1"/>
</dbReference>
<dbReference type="PANTHER" id="PTHR43434:SF19">
    <property type="entry name" value="PHOSPHONOACETALDEHYDE HYDROLASE"/>
    <property type="match status" value="1"/>
</dbReference>
<dbReference type="Pfam" id="PF00702">
    <property type="entry name" value="Hydrolase"/>
    <property type="match status" value="1"/>
</dbReference>
<dbReference type="SFLD" id="SFLDG01129">
    <property type="entry name" value="C1.5:_HAD__Beta-PGM__Phosphata"/>
    <property type="match status" value="1"/>
</dbReference>
<dbReference type="SFLD" id="SFLDF00038">
    <property type="entry name" value="phosphonoacetaldehyde_hydrolas"/>
    <property type="match status" value="1"/>
</dbReference>
<dbReference type="SUPFAM" id="SSF56784">
    <property type="entry name" value="HAD-like"/>
    <property type="match status" value="1"/>
</dbReference>
<keyword id="KW-0378">Hydrolase</keyword>
<keyword id="KW-0460">Magnesium</keyword>
<keyword id="KW-0479">Metal-binding</keyword>
<keyword id="KW-1185">Reference proteome</keyword>
<keyword id="KW-0704">Schiff base</keyword>
<comment type="function">
    <text evidence="1">Involved in phosphonate degradation.</text>
</comment>
<comment type="catalytic activity">
    <reaction evidence="1">
        <text>phosphonoacetaldehyde + H2O = acetaldehyde + phosphate + H(+)</text>
        <dbReference type="Rhea" id="RHEA:18905"/>
        <dbReference type="ChEBI" id="CHEBI:15343"/>
        <dbReference type="ChEBI" id="CHEBI:15377"/>
        <dbReference type="ChEBI" id="CHEBI:15378"/>
        <dbReference type="ChEBI" id="CHEBI:43474"/>
        <dbReference type="ChEBI" id="CHEBI:58383"/>
        <dbReference type="EC" id="3.11.1.1"/>
    </reaction>
</comment>
<comment type="cofactor">
    <cofactor evidence="1">
        <name>Mg(2+)</name>
        <dbReference type="ChEBI" id="CHEBI:18420"/>
    </cofactor>
    <text evidence="1">Binds 1 Mg(2+) ion per subunit.</text>
</comment>
<comment type="subunit">
    <text evidence="1">Homodimer.</text>
</comment>
<comment type="similarity">
    <text evidence="1">Belongs to the HAD-like hydrolase superfamily. PhnX family.</text>
</comment>
<comment type="caution">
    <text evidence="2">The first enzyme involved in phosphonate degradation (PhnW, EC 2.6.1.37) is not found in this organism. The function of this enzyme is therefore uncertain.</text>
</comment>
<gene>
    <name evidence="1" type="primary">phnX</name>
    <name type="ordered locus">BP2275</name>
</gene>
<protein>
    <recommendedName>
        <fullName evidence="1">Phosphonoacetaldehyde hydrolase</fullName>
        <shortName evidence="1">Phosphonatase</shortName>
        <ecNumber evidence="1">3.11.1.1</ecNumber>
    </recommendedName>
    <alternativeName>
        <fullName evidence="1">Phosphonoacetaldehyde phosphonohydrolase</fullName>
    </alternativeName>
</protein>
<proteinExistence type="inferred from homology"/>
<evidence type="ECO:0000255" key="1">
    <source>
        <dbReference type="HAMAP-Rule" id="MF_01375"/>
    </source>
</evidence>
<evidence type="ECO:0000305" key="2"/>
<accession>Q7VWH8</accession>
<feature type="chain" id="PRO_0000284586" description="Phosphonoacetaldehyde hydrolase">
    <location>
        <begin position="1"/>
        <end position="276"/>
    </location>
</feature>
<feature type="active site" description="Nucleophile" evidence="1">
    <location>
        <position position="19"/>
    </location>
</feature>
<feature type="active site" description="Schiff-base intermediate with substrate" evidence="1">
    <location>
        <position position="60"/>
    </location>
</feature>
<feature type="binding site" evidence="1">
    <location>
        <position position="19"/>
    </location>
    <ligand>
        <name>Mg(2+)</name>
        <dbReference type="ChEBI" id="CHEBI:18420"/>
    </ligand>
</feature>
<feature type="binding site" evidence="1">
    <location>
        <position position="21"/>
    </location>
    <ligand>
        <name>Mg(2+)</name>
        <dbReference type="ChEBI" id="CHEBI:18420"/>
    </ligand>
</feature>
<feature type="binding site" evidence="1">
    <location>
        <position position="193"/>
    </location>
    <ligand>
        <name>Mg(2+)</name>
        <dbReference type="ChEBI" id="CHEBI:18420"/>
    </ligand>
</feature>
<reference key="1">
    <citation type="journal article" date="2003" name="Nat. Genet.">
        <title>Comparative analysis of the genome sequences of Bordetella pertussis, Bordetella parapertussis and Bordetella bronchiseptica.</title>
        <authorList>
            <person name="Parkhill J."/>
            <person name="Sebaihia M."/>
            <person name="Preston A."/>
            <person name="Murphy L.D."/>
            <person name="Thomson N.R."/>
            <person name="Harris D.E."/>
            <person name="Holden M.T.G."/>
            <person name="Churcher C.M."/>
            <person name="Bentley S.D."/>
            <person name="Mungall K.L."/>
            <person name="Cerdeno-Tarraga A.-M."/>
            <person name="Temple L."/>
            <person name="James K.D."/>
            <person name="Harris B."/>
            <person name="Quail M.A."/>
            <person name="Achtman M."/>
            <person name="Atkin R."/>
            <person name="Baker S."/>
            <person name="Basham D."/>
            <person name="Bason N."/>
            <person name="Cherevach I."/>
            <person name="Chillingworth T."/>
            <person name="Collins M."/>
            <person name="Cronin A."/>
            <person name="Davis P."/>
            <person name="Doggett J."/>
            <person name="Feltwell T."/>
            <person name="Goble A."/>
            <person name="Hamlin N."/>
            <person name="Hauser H."/>
            <person name="Holroyd S."/>
            <person name="Jagels K."/>
            <person name="Leather S."/>
            <person name="Moule S."/>
            <person name="Norberczak H."/>
            <person name="O'Neil S."/>
            <person name="Ormond D."/>
            <person name="Price C."/>
            <person name="Rabbinowitsch E."/>
            <person name="Rutter S."/>
            <person name="Sanders M."/>
            <person name="Saunders D."/>
            <person name="Seeger K."/>
            <person name="Sharp S."/>
            <person name="Simmonds M."/>
            <person name="Skelton J."/>
            <person name="Squares R."/>
            <person name="Squares S."/>
            <person name="Stevens K."/>
            <person name="Unwin L."/>
            <person name="Whitehead S."/>
            <person name="Barrell B.G."/>
            <person name="Maskell D.J."/>
        </authorList>
    </citation>
    <scope>NUCLEOTIDE SEQUENCE [LARGE SCALE GENOMIC DNA]</scope>
    <source>
        <strain>Tohama I / ATCC BAA-589 / NCTC 13251</strain>
    </source>
</reference>
<organism>
    <name type="scientific">Bordetella pertussis (strain Tohama I / ATCC BAA-589 / NCTC 13251)</name>
    <dbReference type="NCBI Taxonomy" id="257313"/>
    <lineage>
        <taxon>Bacteria</taxon>
        <taxon>Pseudomonadati</taxon>
        <taxon>Pseudomonadota</taxon>
        <taxon>Betaproteobacteria</taxon>
        <taxon>Burkholderiales</taxon>
        <taxon>Alcaligenaceae</taxon>
        <taxon>Bordetella</taxon>
    </lineage>
</organism>